<comment type="function">
    <text evidence="1">Adapter protein implicated in the regulation of a large spectrum of both general and specialized signaling pathways. Binds to a large number of partners, usually by recognition of a phosphoserine or phosphothreonine motif. Binding generally results in the modulation of the activity of the binding partner. Negatively regulates the kinase activity of PDPK1 (By similarity).</text>
</comment>
<comment type="subunit">
    <text evidence="2 3">Homodimer. Interacts with CDK16 (By similarity). Interacts with RGS7 (phosphorylated form). Interacts with SSH1. Interacts with CDKN1B ('Thr-198' phosphorylated form); the interaction translocates CDKN1B to the cytoplasm. Interacts with GAB2. Interacts with the 'Ser-241' phosphorylated form of PDPK1. Interacts with the 'Thr-369' phosphorylated form of DAPK2 (By similarity). Interacts with PI4KB, TBC1D22A and TBC1D22B (By similarity). Interacts with SLITRK1 (By similarity). Interacts with RIPOR2 (By similarity). Interacts with INAVA; the interaction increases upon PRR (pattern recognition receptor) stimulation and is required for cellular signaling pathway activation and cytokine secretion (By similarity). Interacts with MARK2, MARK3 and MARK4 (By similarity). Interacts with MEFV (By similarity).</text>
</comment>
<comment type="subcellular location">
    <subcellularLocation>
        <location>Cytoplasm</location>
    </subcellularLocation>
</comment>
<comment type="similarity">
    <text evidence="5">Belongs to the 14-3-3 family.</text>
</comment>
<name>1433T_RAT</name>
<keyword id="KW-0007">Acetylation</keyword>
<keyword id="KW-0963">Cytoplasm</keyword>
<keyword id="KW-0903">Direct protein sequencing</keyword>
<keyword id="KW-1017">Isopeptide bond</keyword>
<keyword id="KW-0944">Nitration</keyword>
<keyword id="KW-0597">Phosphoprotein</keyword>
<keyword id="KW-1185">Reference proteome</keyword>
<keyword id="KW-0832">Ubl conjugation</keyword>
<proteinExistence type="evidence at protein level"/>
<evidence type="ECO:0000250" key="1"/>
<evidence type="ECO:0000250" key="2">
    <source>
        <dbReference type="UniProtKB" id="P27348"/>
    </source>
</evidence>
<evidence type="ECO:0000250" key="3">
    <source>
        <dbReference type="UniProtKB" id="P68254"/>
    </source>
</evidence>
<evidence type="ECO:0000250" key="4">
    <source>
        <dbReference type="UniProtKB" id="Q9CQV8"/>
    </source>
</evidence>
<evidence type="ECO:0000305" key="5"/>
<reference key="1">
    <citation type="journal article" date="1994" name="Brain Res. Mol. Brain Res.">
        <title>Molecular cloning of rat cDNAs for the zeta and theta subtypes of 14-3-3 protein and differential distributions of their mRNAs in the brain.</title>
        <authorList>
            <person name="Watanabe M."/>
            <person name="Isobe T."/>
            <person name="Ichimura T."/>
            <person name="Kuwano R."/>
            <person name="Takahashi Y."/>
            <person name="Kondo H."/>
            <person name="Inoue Y."/>
        </authorList>
    </citation>
    <scope>NUCLEOTIDE SEQUENCE [MRNA]</scope>
    <source>
        <strain>Wistar</strain>
        <tissue>Brain</tissue>
    </source>
</reference>
<reference key="2">
    <citation type="journal article" date="2004" name="Genome Res.">
        <title>The status, quality, and expansion of the NIH full-length cDNA project: the Mammalian Gene Collection (MGC).</title>
        <authorList>
            <consortium name="The MGC Project Team"/>
        </authorList>
    </citation>
    <scope>NUCLEOTIDE SEQUENCE [LARGE SCALE MRNA]</scope>
    <source>
        <tissue>Prostate</tissue>
    </source>
</reference>
<reference key="3">
    <citation type="submission" date="2009-01" db="UniProtKB">
        <authorList>
            <person name="Lubec G."/>
            <person name="Kang S.U."/>
            <person name="Chen W.-Q."/>
        </authorList>
    </citation>
    <scope>PROTEIN SEQUENCE OF 4-9; 12-18; 28-49; 61-68; 84-115; 128-157; 159-167 AND 194-222</scope>
    <scope>IDENTIFICATION BY MASS SPECTROMETRY</scope>
    <source>
        <strain>Sprague-Dawley</strain>
        <tissue>Brain</tissue>
        <tissue>Hippocampus</tissue>
    </source>
</reference>
<protein>
    <recommendedName>
        <fullName>14-3-3 protein theta</fullName>
    </recommendedName>
    <alternativeName>
        <fullName>14-3-3 protein tau</fullName>
    </alternativeName>
</protein>
<sequence>MEKTELIQKAKLAEQAERYDDMATCMKAVTEQGAELSNEERNLLSVAYKNVVGGRRSAWRVISSIEQKTDTSDKKLQLIKDYREKVESELRSICTTVLELLDKYLIANATNPESKVFYLKMKGDYFRYLAEVACGDDRKQTIENSQGAYQEAFDISKKEMQPTHPIRLGLALNFSVFYYEILNNPELACTLAKTAFDEAIAELDTLNEDSYKDSTLIMQLLRDNLTLWTSDSAGEECDAAEGAEN</sequence>
<gene>
    <name type="primary">Ywhaq</name>
</gene>
<dbReference type="EMBL" id="D17614">
    <property type="protein sequence ID" value="BAA04533.1"/>
    <property type="molecule type" value="mRNA"/>
</dbReference>
<dbReference type="EMBL" id="BC062409">
    <property type="protein sequence ID" value="AAH62409.1"/>
    <property type="molecule type" value="mRNA"/>
</dbReference>
<dbReference type="PIR" id="I52647">
    <property type="entry name" value="S59927"/>
</dbReference>
<dbReference type="RefSeq" id="NP_037185.1">
    <property type="nucleotide sequence ID" value="NM_013053.1"/>
</dbReference>
<dbReference type="SMR" id="P68255"/>
<dbReference type="BioGRID" id="247608">
    <property type="interactions" value="14"/>
</dbReference>
<dbReference type="DIP" id="DIP-947N"/>
<dbReference type="FunCoup" id="P68255">
    <property type="interactions" value="3373"/>
</dbReference>
<dbReference type="IntAct" id="P68255">
    <property type="interactions" value="8"/>
</dbReference>
<dbReference type="MINT" id="P68255"/>
<dbReference type="STRING" id="10116.ENSRNOP00000072011"/>
<dbReference type="GlyGen" id="P68255">
    <property type="glycosylation" value="1 site, 1 O-linked glycan (1 site)"/>
</dbReference>
<dbReference type="iPTMnet" id="P68255"/>
<dbReference type="PhosphoSitePlus" id="P68255"/>
<dbReference type="jPOST" id="P68255"/>
<dbReference type="PaxDb" id="10116-ENSRNOP00000011501"/>
<dbReference type="Ensembl" id="ENSRNOT00000115392.1">
    <property type="protein sequence ID" value="ENSRNOP00000077932.1"/>
    <property type="gene ID" value="ENSRNOG00000051650.2"/>
</dbReference>
<dbReference type="GeneID" id="25577"/>
<dbReference type="KEGG" id="rno:25577"/>
<dbReference type="AGR" id="RGD:3979"/>
<dbReference type="CTD" id="10971"/>
<dbReference type="RGD" id="3979">
    <property type="gene designation" value="Ywhaq"/>
</dbReference>
<dbReference type="eggNOG" id="KOG0841">
    <property type="taxonomic scope" value="Eukaryota"/>
</dbReference>
<dbReference type="GeneTree" id="ENSGT01090000260040"/>
<dbReference type="HOGENOM" id="CLU_058290_1_0_1"/>
<dbReference type="InParanoid" id="P68255"/>
<dbReference type="OMA" id="CFLMYYL"/>
<dbReference type="OrthoDB" id="10260625at2759"/>
<dbReference type="PhylomeDB" id="P68255"/>
<dbReference type="TreeFam" id="TF102002"/>
<dbReference type="Reactome" id="R-RNO-111447">
    <property type="pathway name" value="Activation of BAD and translocation to mitochondria"/>
</dbReference>
<dbReference type="Reactome" id="R-RNO-5625740">
    <property type="pathway name" value="RHO GTPases activate PKNs"/>
</dbReference>
<dbReference type="Reactome" id="R-RNO-5628897">
    <property type="pathway name" value="TP53 Regulates Metabolic Genes"/>
</dbReference>
<dbReference type="Reactome" id="R-RNO-75035">
    <property type="pathway name" value="Chk1/Chk2(Cds1) mediated inactivation of Cyclin B:Cdk1 complex"/>
</dbReference>
<dbReference type="Reactome" id="R-RNO-9614399">
    <property type="pathway name" value="Regulation of localization of FOXO transcription factors"/>
</dbReference>
<dbReference type="PRO" id="PR:P68255"/>
<dbReference type="Proteomes" id="UP000002494">
    <property type="component" value="Chromosome 6"/>
</dbReference>
<dbReference type="Bgee" id="ENSRNOG00000051650">
    <property type="expression patterns" value="Expressed in cerebellum and 20 other cell types or tissues"/>
</dbReference>
<dbReference type="GO" id="GO:0005737">
    <property type="term" value="C:cytoplasm"/>
    <property type="evidence" value="ECO:0000266"/>
    <property type="project" value="RGD"/>
</dbReference>
<dbReference type="GO" id="GO:0005634">
    <property type="term" value="C:nucleus"/>
    <property type="evidence" value="ECO:0000266"/>
    <property type="project" value="RGD"/>
</dbReference>
<dbReference type="GO" id="GO:0032991">
    <property type="term" value="C:protein-containing complex"/>
    <property type="evidence" value="ECO:0000314"/>
    <property type="project" value="RGD"/>
</dbReference>
<dbReference type="GO" id="GO:0045202">
    <property type="term" value="C:synapse"/>
    <property type="evidence" value="ECO:0000314"/>
    <property type="project" value="SynGO"/>
</dbReference>
<dbReference type="GO" id="GO:0071889">
    <property type="term" value="F:14-3-3 protein binding"/>
    <property type="evidence" value="ECO:0000353"/>
    <property type="project" value="RGD"/>
</dbReference>
<dbReference type="GO" id="GO:0042802">
    <property type="term" value="F:identical protein binding"/>
    <property type="evidence" value="ECO:0000266"/>
    <property type="project" value="RGD"/>
</dbReference>
<dbReference type="GO" id="GO:0019904">
    <property type="term" value="F:protein domain specific binding"/>
    <property type="evidence" value="ECO:0000266"/>
    <property type="project" value="RGD"/>
</dbReference>
<dbReference type="GO" id="GO:0044325">
    <property type="term" value="F:transmembrane transporter binding"/>
    <property type="evidence" value="ECO:0000353"/>
    <property type="project" value="RGD"/>
</dbReference>
<dbReference type="GO" id="GO:0045892">
    <property type="term" value="P:negative regulation of DNA-templated transcription"/>
    <property type="evidence" value="ECO:0000266"/>
    <property type="project" value="RGD"/>
</dbReference>
<dbReference type="GO" id="GO:0034766">
    <property type="term" value="P:negative regulation of monoatomic ion transmembrane transport"/>
    <property type="evidence" value="ECO:0000315"/>
    <property type="project" value="RGD"/>
</dbReference>
<dbReference type="GO" id="GO:0008104">
    <property type="term" value="P:protein localization"/>
    <property type="evidence" value="ECO:0000318"/>
    <property type="project" value="GO_Central"/>
</dbReference>
<dbReference type="GO" id="GO:0006605">
    <property type="term" value="P:protein targeting"/>
    <property type="evidence" value="ECO:0000266"/>
    <property type="project" value="RGD"/>
</dbReference>
<dbReference type="GO" id="GO:0007165">
    <property type="term" value="P:signal transduction"/>
    <property type="evidence" value="ECO:0000318"/>
    <property type="project" value="GO_Central"/>
</dbReference>
<dbReference type="GO" id="GO:0007264">
    <property type="term" value="P:small GTPase-mediated signal transduction"/>
    <property type="evidence" value="ECO:0000266"/>
    <property type="project" value="RGD"/>
</dbReference>
<dbReference type="CDD" id="cd10023">
    <property type="entry name" value="14-3-3_theta"/>
    <property type="match status" value="1"/>
</dbReference>
<dbReference type="FunFam" id="1.20.190.20:FF:000001">
    <property type="entry name" value="14-3-3 gamma 1"/>
    <property type="match status" value="1"/>
</dbReference>
<dbReference type="Gene3D" id="1.20.190.20">
    <property type="entry name" value="14-3-3 domain"/>
    <property type="match status" value="1"/>
</dbReference>
<dbReference type="InterPro" id="IPR000308">
    <property type="entry name" value="14-3-3"/>
</dbReference>
<dbReference type="InterPro" id="IPR023409">
    <property type="entry name" value="14-3-3_CS"/>
</dbReference>
<dbReference type="InterPro" id="IPR036815">
    <property type="entry name" value="14-3-3_dom_sf"/>
</dbReference>
<dbReference type="InterPro" id="IPR023410">
    <property type="entry name" value="14-3-3_domain"/>
</dbReference>
<dbReference type="InterPro" id="IPR042584">
    <property type="entry name" value="14-3-3_theta"/>
</dbReference>
<dbReference type="PANTHER" id="PTHR18860">
    <property type="entry name" value="14-3-3 PROTEIN"/>
    <property type="match status" value="1"/>
</dbReference>
<dbReference type="Pfam" id="PF00244">
    <property type="entry name" value="14-3-3"/>
    <property type="match status" value="1"/>
</dbReference>
<dbReference type="PIRSF" id="PIRSF000868">
    <property type="entry name" value="14-3-3"/>
    <property type="match status" value="1"/>
</dbReference>
<dbReference type="PRINTS" id="PR00305">
    <property type="entry name" value="1433ZETA"/>
</dbReference>
<dbReference type="SMART" id="SM00101">
    <property type="entry name" value="14_3_3"/>
    <property type="match status" value="1"/>
</dbReference>
<dbReference type="SUPFAM" id="SSF48445">
    <property type="entry name" value="14-3-3 protein"/>
    <property type="match status" value="1"/>
</dbReference>
<dbReference type="PROSITE" id="PS00796">
    <property type="entry name" value="1433_1"/>
    <property type="match status" value="1"/>
</dbReference>
<dbReference type="PROSITE" id="PS00797">
    <property type="entry name" value="1433_2"/>
    <property type="match status" value="1"/>
</dbReference>
<organism>
    <name type="scientific">Rattus norvegicus</name>
    <name type="common">Rat</name>
    <dbReference type="NCBI Taxonomy" id="10116"/>
    <lineage>
        <taxon>Eukaryota</taxon>
        <taxon>Metazoa</taxon>
        <taxon>Chordata</taxon>
        <taxon>Craniata</taxon>
        <taxon>Vertebrata</taxon>
        <taxon>Euteleostomi</taxon>
        <taxon>Mammalia</taxon>
        <taxon>Eutheria</taxon>
        <taxon>Euarchontoglires</taxon>
        <taxon>Glires</taxon>
        <taxon>Rodentia</taxon>
        <taxon>Myomorpha</taxon>
        <taxon>Muroidea</taxon>
        <taxon>Muridae</taxon>
        <taxon>Murinae</taxon>
        <taxon>Rattus</taxon>
    </lineage>
</organism>
<feature type="chain" id="PRO_0000058640" description="14-3-3 protein theta">
    <location>
        <begin position="1"/>
        <end position="245"/>
    </location>
</feature>
<feature type="site" description="Interaction with phosphoserine on interacting protein" evidence="1">
    <location>
        <position position="56"/>
    </location>
</feature>
<feature type="site" description="Interaction with phosphoserine on interacting protein" evidence="1">
    <location>
        <position position="127"/>
    </location>
</feature>
<feature type="modified residue" description="N-acetylmethionine" evidence="2">
    <location>
        <position position="1"/>
    </location>
</feature>
<feature type="modified residue" description="N6-acetyllysine" evidence="2">
    <location>
        <position position="3"/>
    </location>
</feature>
<feature type="modified residue" description="N6-acetyllysine; alternate" evidence="2">
    <location>
        <position position="49"/>
    </location>
</feature>
<feature type="modified residue" description="N6-acetyllysine" evidence="2">
    <location>
        <position position="68"/>
    </location>
</feature>
<feature type="modified residue" description="3'-nitrotyrosine" evidence="4">
    <location>
        <position position="82"/>
    </location>
</feature>
<feature type="modified residue" description="Phosphoserine" evidence="3">
    <location>
        <position position="92"/>
    </location>
</feature>
<feature type="modified residue" description="3'-nitrotyrosine" evidence="4">
    <location>
        <position position="104"/>
    </location>
</feature>
<feature type="modified residue" description="N6-acetyllysine" evidence="2">
    <location>
        <position position="115"/>
    </location>
</feature>
<feature type="modified residue" description="Phosphoserine; by CK1" evidence="2 5">
    <location>
        <position position="232"/>
    </location>
</feature>
<feature type="cross-link" description="Glycyl lysine isopeptide (Lys-Gly) (interchain with G-Cter in SUMO2); alternate" evidence="2">
    <location>
        <position position="49"/>
    </location>
</feature>
<accession>P68255</accession>
<accession>P35216</accession>